<feature type="chain" id="PRO_0000166056" description="Nitrate reductase [NADH]">
    <location>
        <begin position="1"/>
        <end position="915"/>
    </location>
</feature>
<feature type="domain" description="Cytochrome b5 heme-binding" evidence="6">
    <location>
        <begin position="538"/>
        <end position="613"/>
    </location>
</feature>
<feature type="domain" description="FAD-binding FR-type" evidence="7">
    <location>
        <begin position="654"/>
        <end position="767"/>
    </location>
</feature>
<feature type="region of interest" description="Disordered" evidence="8">
    <location>
        <begin position="1"/>
        <end position="102"/>
    </location>
</feature>
<feature type="compositionally biased region" description="Low complexity" evidence="8">
    <location>
        <begin position="16"/>
        <end position="26"/>
    </location>
</feature>
<feature type="compositionally biased region" description="Acidic residues" evidence="8">
    <location>
        <begin position="57"/>
        <end position="71"/>
    </location>
</feature>
<feature type="compositionally biased region" description="Basic and acidic residues" evidence="8">
    <location>
        <begin position="88"/>
        <end position="97"/>
    </location>
</feature>
<feature type="binding site" evidence="4">
    <location>
        <position position="189"/>
    </location>
    <ligand>
        <name>Mo-molybdopterin</name>
        <dbReference type="ChEBI" id="CHEBI:71302"/>
    </ligand>
    <ligandPart>
        <name>Mo</name>
        <dbReference type="ChEBI" id="CHEBI:28685"/>
    </ligandPart>
</feature>
<feature type="binding site" description="axial binding residue" evidence="6">
    <location>
        <position position="573"/>
    </location>
    <ligand>
        <name>heme</name>
        <dbReference type="ChEBI" id="CHEBI:30413"/>
    </ligand>
    <ligandPart>
        <name>Fe</name>
        <dbReference type="ChEBI" id="CHEBI:18248"/>
    </ligandPart>
</feature>
<feature type="binding site" description="axial binding residue" evidence="6">
    <location>
        <position position="596"/>
    </location>
    <ligand>
        <name>heme</name>
        <dbReference type="ChEBI" id="CHEBI:30413"/>
    </ligand>
    <ligandPart>
        <name>Fe</name>
        <dbReference type="ChEBI" id="CHEBI:18248"/>
    </ligandPart>
</feature>
<feature type="binding site" evidence="2">
    <location>
        <begin position="706"/>
        <end position="709"/>
    </location>
    <ligand>
        <name>FAD</name>
        <dbReference type="ChEBI" id="CHEBI:57692"/>
    </ligand>
</feature>
<feature type="binding site" evidence="2">
    <location>
        <begin position="723"/>
        <end position="727"/>
    </location>
    <ligand>
        <name>FAD</name>
        <dbReference type="ChEBI" id="CHEBI:57692"/>
    </ligand>
</feature>
<feature type="binding site" evidence="3">
    <location>
        <position position="728"/>
    </location>
    <ligand>
        <name>FAD</name>
        <dbReference type="ChEBI" id="CHEBI:57692"/>
    </ligand>
</feature>
<feature type="binding site" evidence="2">
    <location>
        <position position="735"/>
    </location>
    <ligand>
        <name>FAD</name>
        <dbReference type="ChEBI" id="CHEBI:57692"/>
    </ligand>
</feature>
<feature type="binding site" evidence="2">
    <location>
        <begin position="740"/>
        <end position="742"/>
    </location>
    <ligand>
        <name>FAD</name>
        <dbReference type="ChEBI" id="CHEBI:57692"/>
    </ligand>
</feature>
<feature type="binding site" evidence="3">
    <location>
        <position position="791"/>
    </location>
    <ligand>
        <name>FAD</name>
        <dbReference type="ChEBI" id="CHEBI:57692"/>
    </ligand>
</feature>
<feature type="binding site" evidence="2">
    <location>
        <position position="794"/>
    </location>
    <ligand>
        <name>FAD</name>
        <dbReference type="ChEBI" id="CHEBI:57692"/>
    </ligand>
</feature>
<feature type="disulfide bond" description="Interchain" evidence="5">
    <location>
        <position position="428"/>
    </location>
</feature>
<sequence length="915" mass="101770">MAASVEPRQPFGRLDAPATAPTARAPGSNGIRRRADSPVRGCGFPSLISPPRKGPVAEEEEDDDDEDDEGHEDWREAYGSHLQLEVEPSTRDPRDEGTADAWIERNPSLIRLTGKHPLNCEPPLARLMHHGFITPAPLHYVRNHGAVPRGDWATWTVEVTGLVRRPARLTMDELANGFPAAEVPATLVCAGNRRKEQNMVQQTVGFNWGAAGVSTSVWRGARLRDVLLRCGVMSKKGQALNVCFEGAEDLPGGGGSKYGTSVSREWAMDPSRDIILPYAQNGEPLLPDHGYPVRVLIPGCIGGRMVKWVRRIVVTTAESDNYYHFKDNRVLPSHVDAELANAEAWWYRPEYIINELNTNCVITTPGHDEILPINAFTTQRAYTIKGYAYSGGGKKITRVEVTLDGGESWMLCTLDIPEKPNKYGRYWCWCFWSVEIEVLDLLGAKEVAVRTWDQTHNTQPEKLIWNLMGMMNNCWFKIKVNVCRPHKGEIGLVFEHPTQPGNQTGGWMARQKHLETAEAAAPGLKRSTSTPFMNTAGDKQFTMSEVRKHGSKESAWIVVHGHVYDCTAFLKDHPGGADSILINAGSDCTEEFDAIHSDKAKALLDTYRIGELITTGTGYNSDNSVHGGSSLSHLAPIREATKVAGAPIALSSPREKVPCRLVDKKELSHDVRLFRFALPSSDQVLGLPVGKHIFVCATIDGKLCMRAYTPTSMVDEIGQFELLVKVYFRDEHPKFPNGGLMTQYLESLQVGSSYIDVKGPLGHVEYTGRGNFVINGKQRRARRLAMICGGSGITPMYQVIQAVLRDQPEDETEMHLVYANRSEDDILLRDELDRWAAEYPDRLKVWYVIDQVKRPEDGWKFSVGFVTEDILRAHVPEGGDDTLALACGPPPMIKFAISPNLEKMKYDMANSFISF</sequence>
<protein>
    <recommendedName>
        <fullName>Nitrate reductase [NADH]</fullName>
        <shortName>NR</shortName>
        <ecNumber>1.7.1.1</ecNumber>
    </recommendedName>
</protein>
<organism>
    <name type="scientific">Hordeum vulgare</name>
    <name type="common">Barley</name>
    <dbReference type="NCBI Taxonomy" id="4513"/>
    <lineage>
        <taxon>Eukaryota</taxon>
        <taxon>Viridiplantae</taxon>
        <taxon>Streptophyta</taxon>
        <taxon>Embryophyta</taxon>
        <taxon>Tracheophyta</taxon>
        <taxon>Spermatophyta</taxon>
        <taxon>Magnoliopsida</taxon>
        <taxon>Liliopsida</taxon>
        <taxon>Poales</taxon>
        <taxon>Poaceae</taxon>
        <taxon>BOP clade</taxon>
        <taxon>Pooideae</taxon>
        <taxon>Triticodae</taxon>
        <taxon>Triticeae</taxon>
        <taxon>Hordeinae</taxon>
        <taxon>Hordeum</taxon>
    </lineage>
</organism>
<accession>P27967</accession>
<keyword id="KW-1015">Disulfide bond</keyword>
<keyword id="KW-0274">FAD</keyword>
<keyword id="KW-0285">Flavoprotein</keyword>
<keyword id="KW-0349">Heme</keyword>
<keyword id="KW-0408">Iron</keyword>
<keyword id="KW-0479">Metal-binding</keyword>
<keyword id="KW-0500">Molybdenum</keyword>
<keyword id="KW-0520">NAD</keyword>
<keyword id="KW-0534">Nitrate assimilation</keyword>
<keyword id="KW-0560">Oxidoreductase</keyword>
<proteinExistence type="inferred from homology"/>
<reference key="1">
    <citation type="journal article" date="1991" name="Mol. Gen. Genet.">
        <title>Analysis of barley nitrate reductase cDNA and genomic clones.</title>
        <authorList>
            <person name="Schnorr K.M."/>
            <person name="Juricek M."/>
            <person name="Huang C."/>
            <person name="Culley D."/>
            <person name="Kleinhofs A."/>
        </authorList>
    </citation>
    <scope>NUCLEOTIDE SEQUENCE [GENOMIC DNA]</scope>
    <source>
        <strain>cv. Himalaya</strain>
        <tissue>Leaf</tissue>
    </source>
</reference>
<dbReference type="EC" id="1.7.1.1"/>
<dbReference type="EMBL" id="X57845">
    <property type="protein sequence ID" value="CAA40976.1"/>
    <property type="molecule type" value="Genomic_DNA"/>
</dbReference>
<dbReference type="PIR" id="S17453">
    <property type="entry name" value="RDBHNH"/>
</dbReference>
<dbReference type="SMR" id="P27967"/>
<dbReference type="ExpressionAtlas" id="P27967">
    <property type="expression patterns" value="baseline and differential"/>
</dbReference>
<dbReference type="GO" id="GO:0031090">
    <property type="term" value="C:organelle membrane"/>
    <property type="evidence" value="ECO:0007669"/>
    <property type="project" value="UniProtKB-ARBA"/>
</dbReference>
<dbReference type="GO" id="GO:0071949">
    <property type="term" value="F:FAD binding"/>
    <property type="evidence" value="ECO:0000250"/>
    <property type="project" value="UniProtKB"/>
</dbReference>
<dbReference type="GO" id="GO:0020037">
    <property type="term" value="F:heme binding"/>
    <property type="evidence" value="ECO:0007669"/>
    <property type="project" value="InterPro"/>
</dbReference>
<dbReference type="GO" id="GO:0030151">
    <property type="term" value="F:molybdenum ion binding"/>
    <property type="evidence" value="ECO:0000250"/>
    <property type="project" value="UniProtKB"/>
</dbReference>
<dbReference type="GO" id="GO:0043546">
    <property type="term" value="F:molybdopterin cofactor binding"/>
    <property type="evidence" value="ECO:0007669"/>
    <property type="project" value="InterPro"/>
</dbReference>
<dbReference type="GO" id="GO:0009703">
    <property type="term" value="F:nitrate reductase (NADH) activity"/>
    <property type="evidence" value="ECO:0007669"/>
    <property type="project" value="UniProtKB-EC"/>
</dbReference>
<dbReference type="GO" id="GO:0050464">
    <property type="term" value="F:nitrate reductase (NADPH) activity"/>
    <property type="evidence" value="ECO:0007669"/>
    <property type="project" value="InterPro"/>
</dbReference>
<dbReference type="GO" id="GO:0008482">
    <property type="term" value="F:sulfite oxidase activity"/>
    <property type="evidence" value="ECO:0007669"/>
    <property type="project" value="TreeGrafter"/>
</dbReference>
<dbReference type="GO" id="GO:0042128">
    <property type="term" value="P:nitrate assimilation"/>
    <property type="evidence" value="ECO:0007669"/>
    <property type="project" value="UniProtKB-KW"/>
</dbReference>
<dbReference type="GO" id="GO:0006809">
    <property type="term" value="P:nitric oxide biosynthetic process"/>
    <property type="evidence" value="ECO:0007669"/>
    <property type="project" value="InterPro"/>
</dbReference>
<dbReference type="GO" id="GO:0006790">
    <property type="term" value="P:sulfur compound metabolic process"/>
    <property type="evidence" value="ECO:0007669"/>
    <property type="project" value="TreeGrafter"/>
</dbReference>
<dbReference type="CDD" id="cd06183">
    <property type="entry name" value="cyt_b5_reduct_like"/>
    <property type="match status" value="1"/>
</dbReference>
<dbReference type="CDD" id="cd02112">
    <property type="entry name" value="eukary_NR_Moco"/>
    <property type="match status" value="1"/>
</dbReference>
<dbReference type="FunFam" id="2.40.30.10:FF:000021">
    <property type="entry name" value="NADH-cytochrome b5 reductase"/>
    <property type="match status" value="1"/>
</dbReference>
<dbReference type="FunFam" id="2.60.40.650:FF:000001">
    <property type="entry name" value="Nitrate reductase"/>
    <property type="match status" value="1"/>
</dbReference>
<dbReference type="FunFam" id="3.10.120.10:FF:000008">
    <property type="entry name" value="Nitrate reductase"/>
    <property type="match status" value="1"/>
</dbReference>
<dbReference type="FunFam" id="3.90.420.10:FF:000003">
    <property type="entry name" value="Nitrate reductase"/>
    <property type="match status" value="1"/>
</dbReference>
<dbReference type="FunFam" id="3.40.50.80:FF:000025">
    <property type="entry name" value="Nitrate reductase [NADH]"/>
    <property type="match status" value="1"/>
</dbReference>
<dbReference type="Gene3D" id="2.60.40.650">
    <property type="match status" value="1"/>
</dbReference>
<dbReference type="Gene3D" id="3.10.120.10">
    <property type="entry name" value="Cytochrome b5-like heme/steroid binding domain"/>
    <property type="match status" value="1"/>
</dbReference>
<dbReference type="Gene3D" id="3.40.50.80">
    <property type="entry name" value="Nucleotide-binding domain of ferredoxin-NADP reductase (FNR) module"/>
    <property type="match status" value="1"/>
</dbReference>
<dbReference type="Gene3D" id="3.90.420.10">
    <property type="entry name" value="Oxidoreductase, molybdopterin-binding domain"/>
    <property type="match status" value="1"/>
</dbReference>
<dbReference type="Gene3D" id="2.40.30.10">
    <property type="entry name" value="Translation factors"/>
    <property type="match status" value="1"/>
</dbReference>
<dbReference type="InterPro" id="IPR008333">
    <property type="entry name" value="Cbr1-like_FAD-bd_dom"/>
</dbReference>
<dbReference type="InterPro" id="IPR001199">
    <property type="entry name" value="Cyt_B5-like_heme/steroid-bd"/>
</dbReference>
<dbReference type="InterPro" id="IPR036400">
    <property type="entry name" value="Cyt_B5-like_heme/steroid_sf"/>
</dbReference>
<dbReference type="InterPro" id="IPR018506">
    <property type="entry name" value="Cyt_B5_heme-BS"/>
</dbReference>
<dbReference type="InterPro" id="IPR017927">
    <property type="entry name" value="FAD-bd_FR_type"/>
</dbReference>
<dbReference type="InterPro" id="IPR001709">
    <property type="entry name" value="Flavoprot_Pyr_Nucl_cyt_Rdtase"/>
</dbReference>
<dbReference type="InterPro" id="IPR039261">
    <property type="entry name" value="FNR_nucleotide-bd"/>
</dbReference>
<dbReference type="InterPro" id="IPR014756">
    <property type="entry name" value="Ig_E-set"/>
</dbReference>
<dbReference type="InterPro" id="IPR005066">
    <property type="entry name" value="MoCF_OxRdtse_dimer"/>
</dbReference>
<dbReference type="InterPro" id="IPR008335">
    <property type="entry name" value="Mopterin_OxRdtase_euk"/>
</dbReference>
<dbReference type="InterPro" id="IPR012137">
    <property type="entry name" value="Nitr_rd_NADH"/>
</dbReference>
<dbReference type="InterPro" id="IPR001433">
    <property type="entry name" value="OxRdtase_FAD/NAD-bd"/>
</dbReference>
<dbReference type="InterPro" id="IPR000572">
    <property type="entry name" value="OxRdtase_Mopterin-bd_dom"/>
</dbReference>
<dbReference type="InterPro" id="IPR036374">
    <property type="entry name" value="OxRdtase_Mopterin-bd_sf"/>
</dbReference>
<dbReference type="InterPro" id="IPR022407">
    <property type="entry name" value="OxRdtase_Mopterin_BS"/>
</dbReference>
<dbReference type="InterPro" id="IPR017938">
    <property type="entry name" value="Riboflavin_synthase-like_b-brl"/>
</dbReference>
<dbReference type="PANTHER" id="PTHR19372:SF16">
    <property type="entry name" value="NITRATE REDUCTASE"/>
    <property type="match status" value="1"/>
</dbReference>
<dbReference type="PANTHER" id="PTHR19372">
    <property type="entry name" value="SULFITE REDUCTASE"/>
    <property type="match status" value="1"/>
</dbReference>
<dbReference type="Pfam" id="PF00173">
    <property type="entry name" value="Cyt-b5"/>
    <property type="match status" value="1"/>
</dbReference>
<dbReference type="Pfam" id="PF00970">
    <property type="entry name" value="FAD_binding_6"/>
    <property type="match status" value="1"/>
</dbReference>
<dbReference type="Pfam" id="PF03404">
    <property type="entry name" value="Mo-co_dimer"/>
    <property type="match status" value="1"/>
</dbReference>
<dbReference type="Pfam" id="PF00175">
    <property type="entry name" value="NAD_binding_1"/>
    <property type="match status" value="1"/>
</dbReference>
<dbReference type="Pfam" id="PF00174">
    <property type="entry name" value="Oxidored_molyb"/>
    <property type="match status" value="1"/>
</dbReference>
<dbReference type="PIRSF" id="PIRSF000233">
    <property type="entry name" value="Nitr_rd_NADH"/>
    <property type="match status" value="1"/>
</dbReference>
<dbReference type="PRINTS" id="PR00406">
    <property type="entry name" value="CYTB5RDTASE"/>
</dbReference>
<dbReference type="PRINTS" id="PR00363">
    <property type="entry name" value="CYTOCHROMEB5"/>
</dbReference>
<dbReference type="PRINTS" id="PR00407">
    <property type="entry name" value="EUMOPTERIN"/>
</dbReference>
<dbReference type="PRINTS" id="PR00371">
    <property type="entry name" value="FPNCR"/>
</dbReference>
<dbReference type="SMART" id="SM01117">
    <property type="entry name" value="Cyt-b5"/>
    <property type="match status" value="1"/>
</dbReference>
<dbReference type="SUPFAM" id="SSF55856">
    <property type="entry name" value="Cytochrome b5-like heme/steroid binding domain"/>
    <property type="match status" value="1"/>
</dbReference>
<dbReference type="SUPFAM" id="SSF81296">
    <property type="entry name" value="E set domains"/>
    <property type="match status" value="1"/>
</dbReference>
<dbReference type="SUPFAM" id="SSF52343">
    <property type="entry name" value="Ferredoxin reductase-like, C-terminal NADP-linked domain"/>
    <property type="match status" value="1"/>
</dbReference>
<dbReference type="SUPFAM" id="SSF56524">
    <property type="entry name" value="Oxidoreductase molybdopterin-binding domain"/>
    <property type="match status" value="1"/>
</dbReference>
<dbReference type="SUPFAM" id="SSF63380">
    <property type="entry name" value="Riboflavin synthase domain-like"/>
    <property type="match status" value="1"/>
</dbReference>
<dbReference type="PROSITE" id="PS00191">
    <property type="entry name" value="CYTOCHROME_B5_1"/>
    <property type="match status" value="1"/>
</dbReference>
<dbReference type="PROSITE" id="PS50255">
    <property type="entry name" value="CYTOCHROME_B5_2"/>
    <property type="match status" value="1"/>
</dbReference>
<dbReference type="PROSITE" id="PS51384">
    <property type="entry name" value="FAD_FR"/>
    <property type="match status" value="1"/>
</dbReference>
<dbReference type="PROSITE" id="PS00559">
    <property type="entry name" value="MOLYBDOPTERIN_EUK"/>
    <property type="match status" value="1"/>
</dbReference>
<comment type="function">
    <text>Nitrate reductase is a key enzyme involved in the first step of nitrate assimilation in plants, fungi and bacteria.</text>
</comment>
<comment type="catalytic activity">
    <reaction>
        <text>nitrite + NAD(+) + H2O = nitrate + NADH + H(+)</text>
        <dbReference type="Rhea" id="RHEA:17913"/>
        <dbReference type="ChEBI" id="CHEBI:15377"/>
        <dbReference type="ChEBI" id="CHEBI:15378"/>
        <dbReference type="ChEBI" id="CHEBI:16301"/>
        <dbReference type="ChEBI" id="CHEBI:17632"/>
        <dbReference type="ChEBI" id="CHEBI:57540"/>
        <dbReference type="ChEBI" id="CHEBI:57945"/>
        <dbReference type="EC" id="1.7.1.1"/>
    </reaction>
</comment>
<comment type="cofactor">
    <cofactor evidence="1">
        <name>FAD</name>
        <dbReference type="ChEBI" id="CHEBI:57692"/>
    </cofactor>
    <text evidence="1">Binds 1 FAD per subunit.</text>
</comment>
<comment type="cofactor">
    <cofactor evidence="1">
        <name>heme</name>
        <dbReference type="ChEBI" id="CHEBI:30413"/>
    </cofactor>
    <text evidence="1">Binds 1 heme group per subunit.</text>
</comment>
<comment type="cofactor">
    <cofactor evidence="1">
        <name>Mo-molybdopterin</name>
        <dbReference type="ChEBI" id="CHEBI:71302"/>
    </cofactor>
    <text evidence="1">Binds 1 Mo-molybdopterin (Mo-MPT) cofactor per subunit.</text>
</comment>
<comment type="subunit">
    <text>Homodimer.</text>
</comment>
<comment type="similarity">
    <text evidence="9">Belongs to the nitrate reductase family.</text>
</comment>
<evidence type="ECO:0000250" key="1"/>
<evidence type="ECO:0000250" key="2">
    <source>
        <dbReference type="UniProtKB" id="A0A286R227"/>
    </source>
</evidence>
<evidence type="ECO:0000250" key="3">
    <source>
        <dbReference type="UniProtKB" id="P17571"/>
    </source>
</evidence>
<evidence type="ECO:0000250" key="4">
    <source>
        <dbReference type="UniProtKB" id="P49050"/>
    </source>
</evidence>
<evidence type="ECO:0000255" key="5"/>
<evidence type="ECO:0000255" key="6">
    <source>
        <dbReference type="PROSITE-ProRule" id="PRU00279"/>
    </source>
</evidence>
<evidence type="ECO:0000255" key="7">
    <source>
        <dbReference type="PROSITE-ProRule" id="PRU00716"/>
    </source>
</evidence>
<evidence type="ECO:0000256" key="8">
    <source>
        <dbReference type="SAM" id="MobiDB-lite"/>
    </source>
</evidence>
<evidence type="ECO:0000305" key="9"/>
<name>NIA1_HORVU</name>